<evidence type="ECO:0000256" key="1">
    <source>
        <dbReference type="SAM" id="MobiDB-lite"/>
    </source>
</evidence>
<evidence type="ECO:0000269" key="2">
    <source>
    </source>
</evidence>
<evidence type="ECO:0000305" key="3"/>
<protein>
    <recommendedName>
        <fullName>Ras-related protein Rab-34, isoform NARR</fullName>
    </recommendedName>
    <alternativeName>
        <fullName>Nine amino-acid residue-repeats</fullName>
    </alternativeName>
</protein>
<accession>P0DI83</accession>
<feature type="initiator methionine" description="Removed" evidence="2">
    <location>
        <position position="1"/>
    </location>
</feature>
<feature type="chain" id="PRO_0000412533" description="Ras-related protein Rab-34, isoform NARR">
    <location>
        <begin position="2"/>
        <end position="198"/>
    </location>
</feature>
<feature type="repeat" description="1" evidence="2">
    <location>
        <begin position="7"/>
        <end position="15"/>
    </location>
</feature>
<feature type="repeat" description="2" evidence="2">
    <location>
        <begin position="16"/>
        <end position="24"/>
    </location>
</feature>
<feature type="repeat" description="3" evidence="2">
    <location>
        <begin position="25"/>
        <end position="33"/>
    </location>
</feature>
<feature type="repeat" description="4" evidence="2">
    <location>
        <begin position="34"/>
        <end position="42"/>
    </location>
</feature>
<feature type="repeat" description="5" evidence="2">
    <location>
        <begin position="43"/>
        <end position="51"/>
    </location>
</feature>
<feature type="repeat" description="6" evidence="2">
    <location>
        <begin position="52"/>
        <end position="60"/>
    </location>
</feature>
<feature type="repeat" description="7" evidence="2">
    <location>
        <begin position="61"/>
        <end position="69"/>
    </location>
</feature>
<feature type="repeat" description="8" evidence="2">
    <location>
        <begin position="70"/>
        <end position="78"/>
    </location>
</feature>
<feature type="repeat" description="9" evidence="2">
    <location>
        <begin position="79"/>
        <end position="87"/>
    </location>
</feature>
<feature type="repeat" description="10" evidence="2">
    <location>
        <begin position="88"/>
        <end position="96"/>
    </location>
</feature>
<feature type="repeat" description="11" evidence="2">
    <location>
        <begin position="97"/>
        <end position="105"/>
    </location>
</feature>
<feature type="repeat" description="12" evidence="2">
    <location>
        <begin position="106"/>
        <end position="114"/>
    </location>
</feature>
<feature type="repeat" description="13" evidence="2">
    <location>
        <begin position="115"/>
        <end position="123"/>
    </location>
</feature>
<feature type="region of interest" description="13 x 9 AA approximate tandem-repeats of P-R-V-I-V-G-(S/T)-P-R">
    <location>
        <begin position="7"/>
        <end position="125"/>
    </location>
</feature>
<feature type="region of interest" description="Disordered" evidence="1">
    <location>
        <begin position="37"/>
        <end position="64"/>
    </location>
</feature>
<feature type="region of interest" description="Disordered" evidence="1">
    <location>
        <begin position="94"/>
        <end position="198"/>
    </location>
</feature>
<feature type="compositionally biased region" description="Low complexity" evidence="1">
    <location>
        <begin position="94"/>
        <end position="121"/>
    </location>
</feature>
<feature type="compositionally biased region" description="Basic and acidic residues" evidence="1">
    <location>
        <begin position="145"/>
        <end position="157"/>
    </location>
</feature>
<feature type="compositionally biased region" description="Low complexity" evidence="1">
    <location>
        <begin position="161"/>
        <end position="178"/>
    </location>
</feature>
<feature type="modified residue" description="Phosphoserine" evidence="2">
    <location>
        <position position="13"/>
    </location>
</feature>
<feature type="modified residue" description="Phosphothreonine" evidence="2">
    <location>
        <position position="69"/>
    </location>
</feature>
<feature type="modified residue" description="Phosphoserine" evidence="2">
    <location>
        <position position="78"/>
    </location>
</feature>
<feature type="modified residue" description="Phosphoserine" evidence="2">
    <location>
        <position position="87"/>
    </location>
</feature>
<feature type="modified residue" description="Phosphoserine" evidence="2">
    <location>
        <position position="96"/>
    </location>
</feature>
<feature type="modified residue" description="Phosphoserine" evidence="2">
    <location>
        <position position="123"/>
    </location>
</feature>
<dbReference type="EMBL" id="AC010761">
    <property type="status" value="NOT_ANNOTATED_CDS"/>
    <property type="molecule type" value="Genomic_DNA"/>
</dbReference>
<dbReference type="EMBL" id="CX872465">
    <property type="status" value="NOT_ANNOTATED_CDS"/>
    <property type="molecule type" value="mRNA"/>
</dbReference>
<dbReference type="RefSeq" id="NP_001243210.1">
    <molecule id="P0DI83-1"/>
    <property type="nucleotide sequence ID" value="NM_001256281.3"/>
</dbReference>
<dbReference type="BioGRID" id="3188911">
    <property type="interactions" value="7"/>
</dbReference>
<dbReference type="IntAct" id="P0DI83">
    <property type="interactions" value="17"/>
</dbReference>
<dbReference type="iPTMnet" id="P0DI83"/>
<dbReference type="PhosphoSitePlus" id="P0DI83"/>
<dbReference type="SwissPalm" id="P0DI83"/>
<dbReference type="BioMuta" id="RAB34"/>
<dbReference type="DMDM" id="347602360"/>
<dbReference type="jPOST" id="P0DI83"/>
<dbReference type="MassIVE" id="P0DI83"/>
<dbReference type="ProteomicsDB" id="52535">
    <molecule id="P0DI83-1"/>
</dbReference>
<dbReference type="Pumba" id="P0DI83"/>
<dbReference type="Antibodypedia" id="14281">
    <property type="antibodies" value="121 antibodies from 26 providers"/>
</dbReference>
<dbReference type="DNASU" id="83871"/>
<dbReference type="Ensembl" id="ENST00000636154.2">
    <molecule id="P0DI83-1"/>
    <property type="protein sequence ID" value="ENSP00000490450.1"/>
    <property type="gene ID" value="ENSG00000109113.20"/>
</dbReference>
<dbReference type="GeneID" id="83871"/>
<dbReference type="AGR" id="HGNC:16519"/>
<dbReference type="CTD" id="83871"/>
<dbReference type="DisGeNET" id="83871"/>
<dbReference type="GeneCards" id="RAB34"/>
<dbReference type="HGNC" id="HGNC:16519">
    <property type="gene designation" value="RAB34"/>
</dbReference>
<dbReference type="HPA" id="ENSG00000109113">
    <property type="expression patterns" value="Low tissue specificity"/>
</dbReference>
<dbReference type="MalaCards" id="RAB34"/>
<dbReference type="neXtProt" id="NX_P0DI83"/>
<dbReference type="OpenTargets" id="ENSG00000109113"/>
<dbReference type="VEuPathDB" id="HostDB:ENSG00000109113"/>
<dbReference type="GeneTree" id="ENSGT00940000159645"/>
<dbReference type="OrthoDB" id="413584at2759"/>
<dbReference type="PathwayCommons" id="P0DI83"/>
<dbReference type="SignaLink" id="P0DI83"/>
<dbReference type="BioGRID-ORCS" id="83871">
    <property type="hits" value="28 hits in 1157 CRISPR screens"/>
</dbReference>
<dbReference type="CD-CODE" id="91857CE7">
    <property type="entry name" value="Nucleolus"/>
</dbReference>
<dbReference type="ChiTaRS" id="RAB34">
    <property type="organism name" value="human"/>
</dbReference>
<dbReference type="GenomeRNAi" id="83871"/>
<dbReference type="Pharos" id="P0DI83">
    <property type="development level" value="Tbio"/>
</dbReference>
<dbReference type="Proteomes" id="UP000005640">
    <property type="component" value="Chromosome 17"/>
</dbReference>
<dbReference type="Bgee" id="ENSG00000109113">
    <property type="expression patterns" value="Expressed in descending thoracic aorta and 176 other cell types or tissues"/>
</dbReference>
<dbReference type="ExpressionAtlas" id="P0DI83">
    <property type="expression patterns" value="baseline and differential"/>
</dbReference>
<dbReference type="GO" id="GO:0005730">
    <property type="term" value="C:nucleolus"/>
    <property type="evidence" value="ECO:0007669"/>
    <property type="project" value="UniProtKB-SubCell"/>
</dbReference>
<name>NARR_HUMAN</name>
<reference key="1">
    <citation type="journal article" date="2006" name="Nature">
        <title>DNA sequence of human chromosome 17 and analysis of rearrangement in the human lineage.</title>
        <authorList>
            <person name="Zody M.C."/>
            <person name="Garber M."/>
            <person name="Adams D.J."/>
            <person name="Sharpe T."/>
            <person name="Harrow J."/>
            <person name="Lupski J.R."/>
            <person name="Nicholson C."/>
            <person name="Searle S.M."/>
            <person name="Wilming L."/>
            <person name="Young S.K."/>
            <person name="Abouelleil A."/>
            <person name="Allen N.R."/>
            <person name="Bi W."/>
            <person name="Bloom T."/>
            <person name="Borowsky M.L."/>
            <person name="Bugalter B.E."/>
            <person name="Butler J."/>
            <person name="Chang J.L."/>
            <person name="Chen C.-K."/>
            <person name="Cook A."/>
            <person name="Corum B."/>
            <person name="Cuomo C.A."/>
            <person name="de Jong P.J."/>
            <person name="DeCaprio D."/>
            <person name="Dewar K."/>
            <person name="FitzGerald M."/>
            <person name="Gilbert J."/>
            <person name="Gibson R."/>
            <person name="Gnerre S."/>
            <person name="Goldstein S."/>
            <person name="Grafham D.V."/>
            <person name="Grocock R."/>
            <person name="Hafez N."/>
            <person name="Hagopian D.S."/>
            <person name="Hart E."/>
            <person name="Norman C.H."/>
            <person name="Humphray S."/>
            <person name="Jaffe D.B."/>
            <person name="Jones M."/>
            <person name="Kamal M."/>
            <person name="Khodiyar V.K."/>
            <person name="LaButti K."/>
            <person name="Laird G."/>
            <person name="Lehoczky J."/>
            <person name="Liu X."/>
            <person name="Lokyitsang T."/>
            <person name="Loveland J."/>
            <person name="Lui A."/>
            <person name="Macdonald P."/>
            <person name="Major J.E."/>
            <person name="Matthews L."/>
            <person name="Mauceli E."/>
            <person name="McCarroll S.A."/>
            <person name="Mihalev A.H."/>
            <person name="Mudge J."/>
            <person name="Nguyen C."/>
            <person name="Nicol R."/>
            <person name="O'Leary S.B."/>
            <person name="Osoegawa K."/>
            <person name="Schwartz D.C."/>
            <person name="Shaw-Smith C."/>
            <person name="Stankiewicz P."/>
            <person name="Steward C."/>
            <person name="Swarbreck D."/>
            <person name="Venkataraman V."/>
            <person name="Whittaker C.A."/>
            <person name="Yang X."/>
            <person name="Zimmer A.R."/>
            <person name="Bradley A."/>
            <person name="Hubbard T."/>
            <person name="Birren B.W."/>
            <person name="Rogers J."/>
            <person name="Lander E.S."/>
            <person name="Nusbaum C."/>
        </authorList>
    </citation>
    <scope>NUCLEOTIDE SEQUENCE [LARGE SCALE GENOMIC DNA]</scope>
</reference>
<reference key="2">
    <citation type="journal article" date="2004" name="Genome Res.">
        <title>The status, quality, and expansion of the NIH full-length cDNA project: the Mammalian Gene Collection (MGC).</title>
        <authorList>
            <consortium name="The MGC Project Team"/>
        </authorList>
    </citation>
    <scope>NUCLEOTIDE SEQUENCE [LARGE SCALE MRNA]</scope>
</reference>
<reference key="3">
    <citation type="journal article" date="2011" name="Nucleic Acids Res.">
        <title>Identification and characterization of a novel ubiquitous nucleolar protein 'NARR' encoded by a gene overlapping the rab34 oncogene.</title>
        <authorList>
            <person name="Zougman A."/>
            <person name="Mann M."/>
            <person name="Wisniewski J.R."/>
        </authorList>
    </citation>
    <scope>PROTEIN SEQUENCE OF 2-26; 65-71; 74-109; 119-125; 128-145; 155-171 AND 186-193</scope>
    <scope>CLEAVAGE OF INITIATOR METHIONINE</scope>
    <scope>REPEATS</scope>
    <scope>SUBCELLULAR LOCATION</scope>
    <scope>INTERACTION WITH EIF5A AND ERF1</scope>
    <scope>PHOSPHORYLATION AT SER-13; THR-69; SER-78; SER-87; SER-96 AND SER-123</scope>
</reference>
<sequence length="198" mass="21118">MVGQPQPRDDVGSPRPRVIVGTIRPRVIVGTIRPRVIVGSARARPPPDGTPRPQLAAEESPRPRVIFGTPRARVILGSPRPRVIVSSPWPAVVVASPRPRTPVGSPWPRVVVGTPRPRVIVGSPRARVADADPASAPSQGALQGRRQDEHSGTRAEGSRPGGAAPVPEEGGRFARAQRLPPPRHLRLPGAPDRHRGQI</sequence>
<gene>
    <name type="primary">RAB34</name>
    <name type="synonym">NARR</name>
</gene>
<comment type="subunit">
    <text>May interact with EIF5A and ERF1.</text>
</comment>
<comment type="subcellular location">
    <subcellularLocation>
        <location evidence="2">Nucleus</location>
    </subcellularLocation>
    <subcellularLocation>
        <location evidence="2">Nucleus</location>
        <location evidence="2">Nucleolus</location>
    </subcellularLocation>
    <text>Colocalizes with rDNA clusters.</text>
</comment>
<comment type="alternative products">
    <event type="alternative splicing"/>
    <isoform>
        <id>P0DI83-1</id>
        <name>NARR</name>
        <sequence type="displayed"/>
    </isoform>
    <isoform>
        <id>Q9BZG1-1</id>
        <name>1</name>
        <sequence type="external"/>
    </isoform>
    <isoform>
        <id>Q9BZG1-2</id>
        <name>2</name>
        <sequence type="external"/>
    </isoform>
    <isoform>
        <id>Q9BZG1-4</id>
        <name>4</name>
        <sequence type="external"/>
    </isoform>
</comment>
<comment type="PTM">
    <text evidence="2">Phosphorylated during M-phase.</text>
</comment>
<comment type="caution">
    <text evidence="3">Shares its exons with RAB34, but the first 5'-exon is longer, and the translation occurs 443 base pairs upstream from RAB34 initiator, in another frame. May be produced by an alternative promoter.</text>
</comment>
<organism>
    <name type="scientific">Homo sapiens</name>
    <name type="common">Human</name>
    <dbReference type="NCBI Taxonomy" id="9606"/>
    <lineage>
        <taxon>Eukaryota</taxon>
        <taxon>Metazoa</taxon>
        <taxon>Chordata</taxon>
        <taxon>Craniata</taxon>
        <taxon>Vertebrata</taxon>
        <taxon>Euteleostomi</taxon>
        <taxon>Mammalia</taxon>
        <taxon>Eutheria</taxon>
        <taxon>Euarchontoglires</taxon>
        <taxon>Primates</taxon>
        <taxon>Haplorrhini</taxon>
        <taxon>Catarrhini</taxon>
        <taxon>Hominidae</taxon>
        <taxon>Homo</taxon>
    </lineage>
</organism>
<proteinExistence type="evidence at protein level"/>
<keyword id="KW-0025">Alternative splicing</keyword>
<keyword id="KW-0903">Direct protein sequencing</keyword>
<keyword id="KW-0539">Nucleus</keyword>
<keyword id="KW-0597">Phosphoprotein</keyword>
<keyword id="KW-1267">Proteomics identification</keyword>
<keyword id="KW-1185">Reference proteome</keyword>
<keyword id="KW-0677">Repeat</keyword>